<accession>A1IGU3</accession>
<sequence>MADFETDEASSKSESPEQEGQGSEDKSLLHQRLAIRELIDTEVSYLHTLRLCTSDIRGHLQQLPPGDLDILFSNIDDIIQVSSRFLHGLQETACKEEKQAHLIGNLFLEFQEELEQVYKVYCANYDQALLLVKAYQKEPELQKEIQGIIEAAVPQAGPSGLSFLLVIPLQRITKYPLLLQKILENTPADASAHPVLQRATSALQDVNSNINEYKMRKEVALKYTKVEQLSLRERLARINTHTLSKKTTRLSQLLKQEAGLVPRTEDKEFDDLEERFQWVSLCVTELKSNVAAYMDNLEAFLCFRPHERNLDIPGGAAEQYCSLARDLQLQAFLQFKQRLTGLVWQPLCSLARALVGPQNLIKKRLDKLLDFERVEEKLLDVGSVTYEEEAARHTYQALNSLIVAELPQFNHLVMQWLGQILRTFVVLQRDLADQVLRRAESSMALLPHRHVSEPDFQKLLEDTLGQSSSQLRHFRESFEKVLPPSTSQPLLPGSEHQMQSLLTRYGPGKIYQVTSNINGTGTLDLTLPRGQIVALLQNKDTKGNNSRWLVDTGGHRGYVPAGKLQLYHPINPSEKEPRRQTGMPEDYWLPTPEPTQPSVPTVPTMSQVVAVYPFVARSTHELSLQAGQPVTILEAQDKKGNPEWSLVEANGQRGYVPSNFLARTPSPTPRGWNLPS</sequence>
<organism>
    <name type="scientific">Rattus norvegicus</name>
    <name type="common">Rat</name>
    <dbReference type="NCBI Taxonomy" id="10116"/>
    <lineage>
        <taxon>Eukaryota</taxon>
        <taxon>Metazoa</taxon>
        <taxon>Chordata</taxon>
        <taxon>Craniata</taxon>
        <taxon>Vertebrata</taxon>
        <taxon>Euteleostomi</taxon>
        <taxon>Mammalia</taxon>
        <taxon>Eutheria</taxon>
        <taxon>Euarchontoglires</taxon>
        <taxon>Glires</taxon>
        <taxon>Rodentia</taxon>
        <taxon>Myomorpha</taxon>
        <taxon>Muroidea</taxon>
        <taxon>Muridae</taxon>
        <taxon>Murinae</taxon>
        <taxon>Rattus</taxon>
    </lineage>
</organism>
<gene>
    <name type="primary">Arhgef37</name>
</gene>
<proteinExistence type="evidence at transcript level"/>
<evidence type="ECO:0000250" key="1"/>
<evidence type="ECO:0000255" key="2">
    <source>
        <dbReference type="PROSITE-ProRule" id="PRU00062"/>
    </source>
</evidence>
<evidence type="ECO:0000255" key="3">
    <source>
        <dbReference type="PROSITE-ProRule" id="PRU00192"/>
    </source>
</evidence>
<evidence type="ECO:0000255" key="4">
    <source>
        <dbReference type="PROSITE-ProRule" id="PRU00361"/>
    </source>
</evidence>
<evidence type="ECO:0000256" key="5">
    <source>
        <dbReference type="SAM" id="MobiDB-lite"/>
    </source>
</evidence>
<comment type="function">
    <text evidence="1">May act as a guanine nucleotide exchange factor (GEF).</text>
</comment>
<reference key="1">
    <citation type="submission" date="2005-01" db="EMBL/GenBank/DDBJ databases">
        <title>Hypothetical proteins, rat 2-88 (Tuba 3) and its homologs of mouse and human.</title>
        <authorList>
            <person name="Yamazaki N."/>
        </authorList>
    </citation>
    <scope>NUCLEOTIDE SEQUENCE [MRNA]</scope>
    <source>
        <strain>Wistar</strain>
    </source>
</reference>
<protein>
    <recommendedName>
        <fullName>Rho guanine nucleotide exchange factor 37</fullName>
    </recommendedName>
    <alternativeName>
        <fullName>Protein 2-88</fullName>
    </alternativeName>
    <alternativeName>
        <fullName>Scaffold protein tuba 3</fullName>
    </alternativeName>
</protein>
<keyword id="KW-0344">Guanine-nucleotide releasing factor</keyword>
<keyword id="KW-1185">Reference proteome</keyword>
<keyword id="KW-0677">Repeat</keyword>
<keyword id="KW-0728">SH3 domain</keyword>
<feature type="chain" id="PRO_0000337052" description="Rho guanine nucleotide exchange factor 37">
    <location>
        <begin position="1"/>
        <end position="676"/>
    </location>
</feature>
<feature type="domain" description="DH" evidence="2">
    <location>
        <begin position="30"/>
        <end position="213"/>
    </location>
</feature>
<feature type="domain" description="BAR" evidence="4">
    <location>
        <begin position="254"/>
        <end position="455"/>
    </location>
</feature>
<feature type="domain" description="SH3 1" evidence="3">
    <location>
        <begin position="506"/>
        <end position="569"/>
    </location>
</feature>
<feature type="domain" description="SH3 2" evidence="3">
    <location>
        <begin position="603"/>
        <end position="666"/>
    </location>
</feature>
<feature type="region of interest" description="Disordered" evidence="5">
    <location>
        <begin position="1"/>
        <end position="26"/>
    </location>
</feature>
<feature type="region of interest" description="Disordered" evidence="5">
    <location>
        <begin position="568"/>
        <end position="601"/>
    </location>
</feature>
<feature type="region of interest" description="Disordered" evidence="5">
    <location>
        <begin position="657"/>
        <end position="676"/>
    </location>
</feature>
<name>ARH37_RAT</name>
<dbReference type="EMBL" id="AB199794">
    <property type="protein sequence ID" value="BAF43708.1"/>
    <property type="molecule type" value="mRNA"/>
</dbReference>
<dbReference type="RefSeq" id="NP_001094444.1">
    <property type="nucleotide sequence ID" value="NM_001100974.1"/>
</dbReference>
<dbReference type="SMR" id="A1IGU3"/>
<dbReference type="FunCoup" id="A1IGU3">
    <property type="interactions" value="144"/>
</dbReference>
<dbReference type="STRING" id="10116.ENSRNOP00000069658"/>
<dbReference type="GlyGen" id="A1IGU3">
    <property type="glycosylation" value="1 site"/>
</dbReference>
<dbReference type="PhosphoSitePlus" id="A1IGU3"/>
<dbReference type="PaxDb" id="10116-ENSRNOP00000037964"/>
<dbReference type="PeptideAtlas" id="A1IGU3"/>
<dbReference type="GeneID" id="307398"/>
<dbReference type="KEGG" id="rno:307398"/>
<dbReference type="UCSC" id="RGD:1560471">
    <property type="organism name" value="rat"/>
</dbReference>
<dbReference type="AGR" id="RGD:1560471"/>
<dbReference type="CTD" id="389337"/>
<dbReference type="RGD" id="1560471">
    <property type="gene designation" value="Arhgef37"/>
</dbReference>
<dbReference type="eggNOG" id="KOG3519">
    <property type="taxonomic scope" value="Eukaryota"/>
</dbReference>
<dbReference type="InParanoid" id="A1IGU3"/>
<dbReference type="OrthoDB" id="6244550at2759"/>
<dbReference type="PhylomeDB" id="A1IGU3"/>
<dbReference type="Reactome" id="R-RNO-193648">
    <property type="pathway name" value="NRAGE signals death through JNK"/>
</dbReference>
<dbReference type="Reactome" id="R-RNO-416482">
    <property type="pathway name" value="G alpha (12/13) signalling events"/>
</dbReference>
<dbReference type="PRO" id="PR:A1IGU3"/>
<dbReference type="Proteomes" id="UP000002494">
    <property type="component" value="Unplaced"/>
</dbReference>
<dbReference type="GO" id="GO:0005737">
    <property type="term" value="C:cytoplasm"/>
    <property type="evidence" value="ECO:0000318"/>
    <property type="project" value="GO_Central"/>
</dbReference>
<dbReference type="GO" id="GO:0005085">
    <property type="term" value="F:guanyl-nucleotide exchange factor activity"/>
    <property type="evidence" value="ECO:0000318"/>
    <property type="project" value="GO_Central"/>
</dbReference>
<dbReference type="CDD" id="cd07589">
    <property type="entry name" value="BAR_DNMBP"/>
    <property type="match status" value="1"/>
</dbReference>
<dbReference type="CDD" id="cd00160">
    <property type="entry name" value="RhoGEF"/>
    <property type="match status" value="1"/>
</dbReference>
<dbReference type="CDD" id="cd11799">
    <property type="entry name" value="SH3_ARHGEF37_C1"/>
    <property type="match status" value="1"/>
</dbReference>
<dbReference type="CDD" id="cd11941">
    <property type="entry name" value="SH3_ARHGEF37_C2"/>
    <property type="match status" value="1"/>
</dbReference>
<dbReference type="FunFam" id="2.30.30.40:FF:000177">
    <property type="entry name" value="Rho guanine nucleotide exchange factor (GEF) 37"/>
    <property type="match status" value="1"/>
</dbReference>
<dbReference type="FunFam" id="1.20.1270.60:FF:000057">
    <property type="entry name" value="Rho guanine nucleotide exchange factor 37"/>
    <property type="match status" value="1"/>
</dbReference>
<dbReference type="FunFam" id="1.20.900.10:FF:000029">
    <property type="entry name" value="Rho guanine nucleotide exchange factor 37"/>
    <property type="match status" value="1"/>
</dbReference>
<dbReference type="FunFam" id="2.30.30.40:FF:000174">
    <property type="entry name" value="rho guanine nucleotide exchange factor 37"/>
    <property type="match status" value="1"/>
</dbReference>
<dbReference type="Gene3D" id="1.20.1270.60">
    <property type="entry name" value="Arfaptin homology (AH) domain/BAR domain"/>
    <property type="match status" value="1"/>
</dbReference>
<dbReference type="Gene3D" id="1.20.900.10">
    <property type="entry name" value="Dbl homology (DH) domain"/>
    <property type="match status" value="1"/>
</dbReference>
<dbReference type="Gene3D" id="2.30.30.40">
    <property type="entry name" value="SH3 Domains"/>
    <property type="match status" value="2"/>
</dbReference>
<dbReference type="InterPro" id="IPR027267">
    <property type="entry name" value="AH/BAR_dom_sf"/>
</dbReference>
<dbReference type="InterPro" id="IPR035636">
    <property type="entry name" value="ARHGEF37_SH3_2"/>
</dbReference>
<dbReference type="InterPro" id="IPR035823">
    <property type="entry name" value="ARHGEF37_SH3_C1"/>
</dbReference>
<dbReference type="InterPro" id="IPR004148">
    <property type="entry name" value="BAR_dom"/>
</dbReference>
<dbReference type="InterPro" id="IPR035899">
    <property type="entry name" value="DBL_dom_sf"/>
</dbReference>
<dbReference type="InterPro" id="IPR000219">
    <property type="entry name" value="DH_dom"/>
</dbReference>
<dbReference type="InterPro" id="IPR051492">
    <property type="entry name" value="Dynamin-Rho_GEF"/>
</dbReference>
<dbReference type="InterPro" id="IPR036028">
    <property type="entry name" value="SH3-like_dom_sf"/>
</dbReference>
<dbReference type="InterPro" id="IPR001452">
    <property type="entry name" value="SH3_domain"/>
</dbReference>
<dbReference type="PANTHER" id="PTHR22834">
    <property type="entry name" value="NUCLEAR FUSION PROTEIN FUS2"/>
    <property type="match status" value="1"/>
</dbReference>
<dbReference type="PANTHER" id="PTHR22834:SF9">
    <property type="entry name" value="RHO GUANINE NUCLEOTIDE EXCHANGE FACTOR 37"/>
    <property type="match status" value="1"/>
</dbReference>
<dbReference type="Pfam" id="PF00621">
    <property type="entry name" value="RhoGEF"/>
    <property type="match status" value="1"/>
</dbReference>
<dbReference type="Pfam" id="PF07653">
    <property type="entry name" value="SH3_2"/>
    <property type="match status" value="1"/>
</dbReference>
<dbReference type="Pfam" id="PF14604">
    <property type="entry name" value="SH3_9"/>
    <property type="match status" value="1"/>
</dbReference>
<dbReference type="SMART" id="SM00721">
    <property type="entry name" value="BAR"/>
    <property type="match status" value="1"/>
</dbReference>
<dbReference type="SMART" id="SM00325">
    <property type="entry name" value="RhoGEF"/>
    <property type="match status" value="1"/>
</dbReference>
<dbReference type="SMART" id="SM00326">
    <property type="entry name" value="SH3"/>
    <property type="match status" value="2"/>
</dbReference>
<dbReference type="SUPFAM" id="SSF103657">
    <property type="entry name" value="BAR/IMD domain-like"/>
    <property type="match status" value="1"/>
</dbReference>
<dbReference type="SUPFAM" id="SSF48065">
    <property type="entry name" value="DBL homology domain (DH-domain)"/>
    <property type="match status" value="1"/>
</dbReference>
<dbReference type="SUPFAM" id="SSF50044">
    <property type="entry name" value="SH3-domain"/>
    <property type="match status" value="2"/>
</dbReference>
<dbReference type="PROSITE" id="PS51021">
    <property type="entry name" value="BAR"/>
    <property type="match status" value="1"/>
</dbReference>
<dbReference type="PROSITE" id="PS50010">
    <property type="entry name" value="DH_2"/>
    <property type="match status" value="1"/>
</dbReference>
<dbReference type="PROSITE" id="PS50002">
    <property type="entry name" value="SH3"/>
    <property type="match status" value="2"/>
</dbReference>